<organism>
    <name type="scientific">Pseudomonas entomophila (strain L48)</name>
    <dbReference type="NCBI Taxonomy" id="384676"/>
    <lineage>
        <taxon>Bacteria</taxon>
        <taxon>Pseudomonadati</taxon>
        <taxon>Pseudomonadota</taxon>
        <taxon>Gammaproteobacteria</taxon>
        <taxon>Pseudomonadales</taxon>
        <taxon>Pseudomonadaceae</taxon>
        <taxon>Pseudomonas</taxon>
    </lineage>
</organism>
<proteinExistence type="inferred from homology"/>
<name>ISPH_PSEE4</name>
<dbReference type="EC" id="1.17.7.4" evidence="1"/>
<dbReference type="EMBL" id="CT573326">
    <property type="protein sequence ID" value="CAK17358.1"/>
    <property type="molecule type" value="Genomic_DNA"/>
</dbReference>
<dbReference type="RefSeq" id="WP_011535723.1">
    <property type="nucleotide sequence ID" value="NC_008027.1"/>
</dbReference>
<dbReference type="SMR" id="Q1I4S8"/>
<dbReference type="STRING" id="384676.PSEEN4689"/>
<dbReference type="GeneID" id="32807659"/>
<dbReference type="KEGG" id="pen:PSEEN4689"/>
<dbReference type="eggNOG" id="COG0761">
    <property type="taxonomic scope" value="Bacteria"/>
</dbReference>
<dbReference type="HOGENOM" id="CLU_027486_1_1_6"/>
<dbReference type="OrthoDB" id="9804068at2"/>
<dbReference type="UniPathway" id="UPA00056">
    <property type="reaction ID" value="UER00097"/>
</dbReference>
<dbReference type="UniPathway" id="UPA00059">
    <property type="reaction ID" value="UER00105"/>
</dbReference>
<dbReference type="Proteomes" id="UP000000658">
    <property type="component" value="Chromosome"/>
</dbReference>
<dbReference type="GO" id="GO:0051539">
    <property type="term" value="F:4 iron, 4 sulfur cluster binding"/>
    <property type="evidence" value="ECO:0007669"/>
    <property type="project" value="UniProtKB-UniRule"/>
</dbReference>
<dbReference type="GO" id="GO:0051745">
    <property type="term" value="F:4-hydroxy-3-methylbut-2-enyl diphosphate reductase activity"/>
    <property type="evidence" value="ECO:0007669"/>
    <property type="project" value="UniProtKB-UniRule"/>
</dbReference>
<dbReference type="GO" id="GO:0046872">
    <property type="term" value="F:metal ion binding"/>
    <property type="evidence" value="ECO:0007669"/>
    <property type="project" value="UniProtKB-KW"/>
</dbReference>
<dbReference type="GO" id="GO:0050992">
    <property type="term" value="P:dimethylallyl diphosphate biosynthetic process"/>
    <property type="evidence" value="ECO:0007669"/>
    <property type="project" value="UniProtKB-UniRule"/>
</dbReference>
<dbReference type="GO" id="GO:0019288">
    <property type="term" value="P:isopentenyl diphosphate biosynthetic process, methylerythritol 4-phosphate pathway"/>
    <property type="evidence" value="ECO:0007669"/>
    <property type="project" value="UniProtKB-UniRule"/>
</dbReference>
<dbReference type="GO" id="GO:0016114">
    <property type="term" value="P:terpenoid biosynthetic process"/>
    <property type="evidence" value="ECO:0007669"/>
    <property type="project" value="UniProtKB-UniRule"/>
</dbReference>
<dbReference type="CDD" id="cd13944">
    <property type="entry name" value="lytB_ispH"/>
    <property type="match status" value="1"/>
</dbReference>
<dbReference type="Gene3D" id="3.40.50.11270">
    <property type="match status" value="1"/>
</dbReference>
<dbReference type="Gene3D" id="3.40.1010.20">
    <property type="entry name" value="4-hydroxy-3-methylbut-2-enyl diphosphate reductase, catalytic domain"/>
    <property type="match status" value="2"/>
</dbReference>
<dbReference type="HAMAP" id="MF_00191">
    <property type="entry name" value="IspH"/>
    <property type="match status" value="1"/>
</dbReference>
<dbReference type="InterPro" id="IPR003451">
    <property type="entry name" value="LytB/IspH"/>
</dbReference>
<dbReference type="NCBIfam" id="TIGR00216">
    <property type="entry name" value="ispH_lytB"/>
    <property type="match status" value="1"/>
</dbReference>
<dbReference type="NCBIfam" id="NF002188">
    <property type="entry name" value="PRK01045.1-2"/>
    <property type="match status" value="1"/>
</dbReference>
<dbReference type="NCBIfam" id="NF002190">
    <property type="entry name" value="PRK01045.1-4"/>
    <property type="match status" value="1"/>
</dbReference>
<dbReference type="PANTHER" id="PTHR30426">
    <property type="entry name" value="4-HYDROXY-3-METHYLBUT-2-ENYL DIPHOSPHATE REDUCTASE"/>
    <property type="match status" value="1"/>
</dbReference>
<dbReference type="PANTHER" id="PTHR30426:SF0">
    <property type="entry name" value="4-HYDROXY-3-METHYLBUT-2-ENYL DIPHOSPHATE REDUCTASE"/>
    <property type="match status" value="1"/>
</dbReference>
<dbReference type="Pfam" id="PF02401">
    <property type="entry name" value="LYTB"/>
    <property type="match status" value="1"/>
</dbReference>
<protein>
    <recommendedName>
        <fullName evidence="1">4-hydroxy-3-methylbut-2-enyl diphosphate reductase</fullName>
        <shortName evidence="1">HMBPP reductase</shortName>
        <ecNumber evidence="1">1.17.7.4</ecNumber>
    </recommendedName>
</protein>
<reference key="1">
    <citation type="journal article" date="2006" name="Nat. Biotechnol.">
        <title>Complete genome sequence of the entomopathogenic and metabolically versatile soil bacterium Pseudomonas entomophila.</title>
        <authorList>
            <person name="Vodovar N."/>
            <person name="Vallenet D."/>
            <person name="Cruveiller S."/>
            <person name="Rouy Z."/>
            <person name="Barbe V."/>
            <person name="Acosta C."/>
            <person name="Cattolico L."/>
            <person name="Jubin C."/>
            <person name="Lajus A."/>
            <person name="Segurens B."/>
            <person name="Vacherie B."/>
            <person name="Wincker P."/>
            <person name="Weissenbach J."/>
            <person name="Lemaitre B."/>
            <person name="Medigue C."/>
            <person name="Boccard F."/>
        </authorList>
    </citation>
    <scope>NUCLEOTIDE SEQUENCE [LARGE SCALE GENOMIC DNA]</scope>
    <source>
        <strain>L48</strain>
    </source>
</reference>
<sequence>MQIKLANPRGFCAGVDRAIEIVNRALEVFGPPIYVRHEVVHNKFVVEDLRNRGAVFVEELDQVPDDVIVIFSAHGVSQAVRQEAAGRGLKVFDATCPLVTKVHIEVAKYSRDGRECILIGHAGHPEVEGTMGQYDASNGGSIYLVEDEKDVAALQVRNPDHLAFVTQTTLSMDDTSRVIDALRERFPNIGGPRKDDICYATQNRQDAVKQLADECDVVLVVGSPNSSNSNRLRELAERMSTPAYLIDGAEDLQRSWFDGAQRIGITAGASAPEVLVRGVIDQLKAWGATGAEELDGREENITFSMPKELRVRSLI</sequence>
<evidence type="ECO:0000255" key="1">
    <source>
        <dbReference type="HAMAP-Rule" id="MF_00191"/>
    </source>
</evidence>
<gene>
    <name evidence="1" type="primary">ispH</name>
    <name type="ordered locus">PSEEN4689</name>
</gene>
<feature type="chain" id="PRO_1000021160" description="4-hydroxy-3-methylbut-2-enyl diphosphate reductase">
    <location>
        <begin position="1"/>
        <end position="315"/>
    </location>
</feature>
<feature type="active site" description="Proton donor" evidence="1">
    <location>
        <position position="126"/>
    </location>
</feature>
<feature type="binding site" evidence="1">
    <location>
        <position position="12"/>
    </location>
    <ligand>
        <name>[4Fe-4S] cluster</name>
        <dbReference type="ChEBI" id="CHEBI:49883"/>
    </ligand>
</feature>
<feature type="binding site" evidence="1">
    <location>
        <position position="41"/>
    </location>
    <ligand>
        <name>(2E)-4-hydroxy-3-methylbut-2-enyl diphosphate</name>
        <dbReference type="ChEBI" id="CHEBI:128753"/>
    </ligand>
</feature>
<feature type="binding site" evidence="1">
    <location>
        <position position="41"/>
    </location>
    <ligand>
        <name>dimethylallyl diphosphate</name>
        <dbReference type="ChEBI" id="CHEBI:57623"/>
    </ligand>
</feature>
<feature type="binding site" evidence="1">
    <location>
        <position position="41"/>
    </location>
    <ligand>
        <name>isopentenyl diphosphate</name>
        <dbReference type="ChEBI" id="CHEBI:128769"/>
    </ligand>
</feature>
<feature type="binding site" evidence="1">
    <location>
        <position position="74"/>
    </location>
    <ligand>
        <name>(2E)-4-hydroxy-3-methylbut-2-enyl diphosphate</name>
        <dbReference type="ChEBI" id="CHEBI:128753"/>
    </ligand>
</feature>
<feature type="binding site" evidence="1">
    <location>
        <position position="74"/>
    </location>
    <ligand>
        <name>dimethylallyl diphosphate</name>
        <dbReference type="ChEBI" id="CHEBI:57623"/>
    </ligand>
</feature>
<feature type="binding site" evidence="1">
    <location>
        <position position="74"/>
    </location>
    <ligand>
        <name>isopentenyl diphosphate</name>
        <dbReference type="ChEBI" id="CHEBI:128769"/>
    </ligand>
</feature>
<feature type="binding site" evidence="1">
    <location>
        <position position="96"/>
    </location>
    <ligand>
        <name>[4Fe-4S] cluster</name>
        <dbReference type="ChEBI" id="CHEBI:49883"/>
    </ligand>
</feature>
<feature type="binding site" evidence="1">
    <location>
        <position position="124"/>
    </location>
    <ligand>
        <name>(2E)-4-hydroxy-3-methylbut-2-enyl diphosphate</name>
        <dbReference type="ChEBI" id="CHEBI:128753"/>
    </ligand>
</feature>
<feature type="binding site" evidence="1">
    <location>
        <position position="124"/>
    </location>
    <ligand>
        <name>dimethylallyl diphosphate</name>
        <dbReference type="ChEBI" id="CHEBI:57623"/>
    </ligand>
</feature>
<feature type="binding site" evidence="1">
    <location>
        <position position="124"/>
    </location>
    <ligand>
        <name>isopentenyl diphosphate</name>
        <dbReference type="ChEBI" id="CHEBI:128769"/>
    </ligand>
</feature>
<feature type="binding site" evidence="1">
    <location>
        <position position="168"/>
    </location>
    <ligand>
        <name>(2E)-4-hydroxy-3-methylbut-2-enyl diphosphate</name>
        <dbReference type="ChEBI" id="CHEBI:128753"/>
    </ligand>
</feature>
<feature type="binding site" evidence="1">
    <location>
        <position position="198"/>
    </location>
    <ligand>
        <name>[4Fe-4S] cluster</name>
        <dbReference type="ChEBI" id="CHEBI:49883"/>
    </ligand>
</feature>
<feature type="binding site" evidence="1">
    <location>
        <position position="226"/>
    </location>
    <ligand>
        <name>(2E)-4-hydroxy-3-methylbut-2-enyl diphosphate</name>
        <dbReference type="ChEBI" id="CHEBI:128753"/>
    </ligand>
</feature>
<feature type="binding site" evidence="1">
    <location>
        <position position="226"/>
    </location>
    <ligand>
        <name>dimethylallyl diphosphate</name>
        <dbReference type="ChEBI" id="CHEBI:57623"/>
    </ligand>
</feature>
<feature type="binding site" evidence="1">
    <location>
        <position position="226"/>
    </location>
    <ligand>
        <name>isopentenyl diphosphate</name>
        <dbReference type="ChEBI" id="CHEBI:128769"/>
    </ligand>
</feature>
<feature type="binding site" evidence="1">
    <location>
        <position position="227"/>
    </location>
    <ligand>
        <name>(2E)-4-hydroxy-3-methylbut-2-enyl diphosphate</name>
        <dbReference type="ChEBI" id="CHEBI:128753"/>
    </ligand>
</feature>
<feature type="binding site" evidence="1">
    <location>
        <position position="227"/>
    </location>
    <ligand>
        <name>dimethylallyl diphosphate</name>
        <dbReference type="ChEBI" id="CHEBI:57623"/>
    </ligand>
</feature>
<feature type="binding site" evidence="1">
    <location>
        <position position="227"/>
    </location>
    <ligand>
        <name>isopentenyl diphosphate</name>
        <dbReference type="ChEBI" id="CHEBI:128769"/>
    </ligand>
</feature>
<feature type="binding site" evidence="1">
    <location>
        <position position="228"/>
    </location>
    <ligand>
        <name>(2E)-4-hydroxy-3-methylbut-2-enyl diphosphate</name>
        <dbReference type="ChEBI" id="CHEBI:128753"/>
    </ligand>
</feature>
<feature type="binding site" evidence="1">
    <location>
        <position position="228"/>
    </location>
    <ligand>
        <name>dimethylallyl diphosphate</name>
        <dbReference type="ChEBI" id="CHEBI:57623"/>
    </ligand>
</feature>
<feature type="binding site" evidence="1">
    <location>
        <position position="228"/>
    </location>
    <ligand>
        <name>isopentenyl diphosphate</name>
        <dbReference type="ChEBI" id="CHEBI:128769"/>
    </ligand>
</feature>
<feature type="binding site" evidence="1">
    <location>
        <position position="270"/>
    </location>
    <ligand>
        <name>(2E)-4-hydroxy-3-methylbut-2-enyl diphosphate</name>
        <dbReference type="ChEBI" id="CHEBI:128753"/>
    </ligand>
</feature>
<feature type="binding site" evidence="1">
    <location>
        <position position="270"/>
    </location>
    <ligand>
        <name>dimethylallyl diphosphate</name>
        <dbReference type="ChEBI" id="CHEBI:57623"/>
    </ligand>
</feature>
<feature type="binding site" evidence="1">
    <location>
        <position position="270"/>
    </location>
    <ligand>
        <name>isopentenyl diphosphate</name>
        <dbReference type="ChEBI" id="CHEBI:128769"/>
    </ligand>
</feature>
<accession>Q1I4S8</accession>
<comment type="function">
    <text evidence="1">Catalyzes the conversion of 1-hydroxy-2-methyl-2-(E)-butenyl 4-diphosphate (HMBPP) into a mixture of isopentenyl diphosphate (IPP) and dimethylallyl diphosphate (DMAPP). Acts in the terminal step of the DOXP/MEP pathway for isoprenoid precursor biosynthesis.</text>
</comment>
<comment type="catalytic activity">
    <reaction evidence="1">
        <text>isopentenyl diphosphate + 2 oxidized [2Fe-2S]-[ferredoxin] + H2O = (2E)-4-hydroxy-3-methylbut-2-enyl diphosphate + 2 reduced [2Fe-2S]-[ferredoxin] + 2 H(+)</text>
        <dbReference type="Rhea" id="RHEA:24488"/>
        <dbReference type="Rhea" id="RHEA-COMP:10000"/>
        <dbReference type="Rhea" id="RHEA-COMP:10001"/>
        <dbReference type="ChEBI" id="CHEBI:15377"/>
        <dbReference type="ChEBI" id="CHEBI:15378"/>
        <dbReference type="ChEBI" id="CHEBI:33737"/>
        <dbReference type="ChEBI" id="CHEBI:33738"/>
        <dbReference type="ChEBI" id="CHEBI:128753"/>
        <dbReference type="ChEBI" id="CHEBI:128769"/>
        <dbReference type="EC" id="1.17.7.4"/>
    </reaction>
</comment>
<comment type="catalytic activity">
    <reaction evidence="1">
        <text>dimethylallyl diphosphate + 2 oxidized [2Fe-2S]-[ferredoxin] + H2O = (2E)-4-hydroxy-3-methylbut-2-enyl diphosphate + 2 reduced [2Fe-2S]-[ferredoxin] + 2 H(+)</text>
        <dbReference type="Rhea" id="RHEA:24825"/>
        <dbReference type="Rhea" id="RHEA-COMP:10000"/>
        <dbReference type="Rhea" id="RHEA-COMP:10001"/>
        <dbReference type="ChEBI" id="CHEBI:15377"/>
        <dbReference type="ChEBI" id="CHEBI:15378"/>
        <dbReference type="ChEBI" id="CHEBI:33737"/>
        <dbReference type="ChEBI" id="CHEBI:33738"/>
        <dbReference type="ChEBI" id="CHEBI:57623"/>
        <dbReference type="ChEBI" id="CHEBI:128753"/>
        <dbReference type="EC" id="1.17.7.4"/>
    </reaction>
</comment>
<comment type="cofactor">
    <cofactor evidence="1">
        <name>[4Fe-4S] cluster</name>
        <dbReference type="ChEBI" id="CHEBI:49883"/>
    </cofactor>
    <text evidence="1">Binds 1 [4Fe-4S] cluster per subunit.</text>
</comment>
<comment type="pathway">
    <text evidence="1">Isoprenoid biosynthesis; dimethylallyl diphosphate biosynthesis; dimethylallyl diphosphate from (2E)-4-hydroxy-3-methylbutenyl diphosphate: step 1/1.</text>
</comment>
<comment type="pathway">
    <text evidence="1">Isoprenoid biosynthesis; isopentenyl diphosphate biosynthesis via DXP pathway; isopentenyl diphosphate from 1-deoxy-D-xylulose 5-phosphate: step 6/6.</text>
</comment>
<comment type="similarity">
    <text evidence="1">Belongs to the IspH family.</text>
</comment>
<keyword id="KW-0004">4Fe-4S</keyword>
<keyword id="KW-0408">Iron</keyword>
<keyword id="KW-0411">Iron-sulfur</keyword>
<keyword id="KW-0414">Isoprene biosynthesis</keyword>
<keyword id="KW-0479">Metal-binding</keyword>
<keyword id="KW-0560">Oxidoreductase</keyword>